<name>RS14Z_DESHD</name>
<comment type="function">
    <text evidence="1">Binds 16S rRNA, required for the assembly of 30S particles and may also be responsible for determining the conformation of the 16S rRNA at the A site.</text>
</comment>
<comment type="cofactor">
    <cofactor evidence="1">
        <name>Zn(2+)</name>
        <dbReference type="ChEBI" id="CHEBI:29105"/>
    </cofactor>
    <text evidence="1">Binds 1 zinc ion per subunit.</text>
</comment>
<comment type="subunit">
    <text evidence="1">Part of the 30S ribosomal subunit. Contacts proteins S3 and S10.</text>
</comment>
<comment type="similarity">
    <text evidence="1">Belongs to the universal ribosomal protein uS14 family. Zinc-binding uS14 subfamily.</text>
</comment>
<gene>
    <name evidence="1" type="primary">rpsZ</name>
    <name evidence="1" type="synonym">rpsN</name>
    <name type="ordered locus">Dhaf_0435</name>
</gene>
<proteinExistence type="inferred from homology"/>
<dbReference type="EMBL" id="CP001336">
    <property type="protein sequence ID" value="ACL18502.1"/>
    <property type="molecule type" value="Genomic_DNA"/>
</dbReference>
<dbReference type="RefSeq" id="WP_011459104.1">
    <property type="nucleotide sequence ID" value="NC_011830.1"/>
</dbReference>
<dbReference type="SMR" id="B8G1X9"/>
<dbReference type="KEGG" id="dhd:Dhaf_0435"/>
<dbReference type="HOGENOM" id="CLU_139869_3_0_9"/>
<dbReference type="Proteomes" id="UP000007726">
    <property type="component" value="Chromosome"/>
</dbReference>
<dbReference type="GO" id="GO:0005737">
    <property type="term" value="C:cytoplasm"/>
    <property type="evidence" value="ECO:0007669"/>
    <property type="project" value="UniProtKB-ARBA"/>
</dbReference>
<dbReference type="GO" id="GO:0015935">
    <property type="term" value="C:small ribosomal subunit"/>
    <property type="evidence" value="ECO:0007669"/>
    <property type="project" value="TreeGrafter"/>
</dbReference>
<dbReference type="GO" id="GO:0019843">
    <property type="term" value="F:rRNA binding"/>
    <property type="evidence" value="ECO:0007669"/>
    <property type="project" value="UniProtKB-UniRule"/>
</dbReference>
<dbReference type="GO" id="GO:0003735">
    <property type="term" value="F:structural constituent of ribosome"/>
    <property type="evidence" value="ECO:0007669"/>
    <property type="project" value="InterPro"/>
</dbReference>
<dbReference type="GO" id="GO:0008270">
    <property type="term" value="F:zinc ion binding"/>
    <property type="evidence" value="ECO:0007669"/>
    <property type="project" value="UniProtKB-UniRule"/>
</dbReference>
<dbReference type="GO" id="GO:0006412">
    <property type="term" value="P:translation"/>
    <property type="evidence" value="ECO:0007669"/>
    <property type="project" value="UniProtKB-UniRule"/>
</dbReference>
<dbReference type="FunFam" id="4.10.830.10:FF:000001">
    <property type="entry name" value="30S ribosomal protein S14 type Z"/>
    <property type="match status" value="1"/>
</dbReference>
<dbReference type="Gene3D" id="4.10.830.10">
    <property type="entry name" value="30s Ribosomal Protein S14, Chain N"/>
    <property type="match status" value="1"/>
</dbReference>
<dbReference type="HAMAP" id="MF_01364_B">
    <property type="entry name" value="Ribosomal_uS14_2_B"/>
    <property type="match status" value="1"/>
</dbReference>
<dbReference type="InterPro" id="IPR001209">
    <property type="entry name" value="Ribosomal_uS14"/>
</dbReference>
<dbReference type="InterPro" id="IPR023053">
    <property type="entry name" value="Ribosomal_uS14_bact"/>
</dbReference>
<dbReference type="InterPro" id="IPR018271">
    <property type="entry name" value="Ribosomal_uS14_CS"/>
</dbReference>
<dbReference type="InterPro" id="IPR043140">
    <property type="entry name" value="Ribosomal_uS14_sf"/>
</dbReference>
<dbReference type="NCBIfam" id="NF005974">
    <property type="entry name" value="PRK08061.1"/>
    <property type="match status" value="1"/>
</dbReference>
<dbReference type="PANTHER" id="PTHR19836">
    <property type="entry name" value="30S RIBOSOMAL PROTEIN S14"/>
    <property type="match status" value="1"/>
</dbReference>
<dbReference type="PANTHER" id="PTHR19836:SF19">
    <property type="entry name" value="SMALL RIBOSOMAL SUBUNIT PROTEIN US14M"/>
    <property type="match status" value="1"/>
</dbReference>
<dbReference type="Pfam" id="PF00253">
    <property type="entry name" value="Ribosomal_S14"/>
    <property type="match status" value="1"/>
</dbReference>
<dbReference type="SUPFAM" id="SSF57716">
    <property type="entry name" value="Glucocorticoid receptor-like (DNA-binding domain)"/>
    <property type="match status" value="1"/>
</dbReference>
<dbReference type="PROSITE" id="PS00527">
    <property type="entry name" value="RIBOSOMAL_S14"/>
    <property type="match status" value="1"/>
</dbReference>
<organism>
    <name type="scientific">Desulfitobacterium hafniense (strain DSM 10664 / DCB-2)</name>
    <dbReference type="NCBI Taxonomy" id="272564"/>
    <lineage>
        <taxon>Bacteria</taxon>
        <taxon>Bacillati</taxon>
        <taxon>Bacillota</taxon>
        <taxon>Clostridia</taxon>
        <taxon>Eubacteriales</taxon>
        <taxon>Desulfitobacteriaceae</taxon>
        <taxon>Desulfitobacterium</taxon>
    </lineage>
</organism>
<accession>B8G1X9</accession>
<feature type="chain" id="PRO_1000166768" description="Small ribosomal subunit protein uS14">
    <location>
        <begin position="1"/>
        <end position="61"/>
    </location>
</feature>
<feature type="binding site" evidence="1">
    <location>
        <position position="24"/>
    </location>
    <ligand>
        <name>Zn(2+)</name>
        <dbReference type="ChEBI" id="CHEBI:29105"/>
    </ligand>
</feature>
<feature type="binding site" evidence="1">
    <location>
        <position position="27"/>
    </location>
    <ligand>
        <name>Zn(2+)</name>
        <dbReference type="ChEBI" id="CHEBI:29105"/>
    </ligand>
</feature>
<feature type="binding site" evidence="1">
    <location>
        <position position="40"/>
    </location>
    <ligand>
        <name>Zn(2+)</name>
        <dbReference type="ChEBI" id="CHEBI:29105"/>
    </ligand>
</feature>
<feature type="binding site" evidence="1">
    <location>
        <position position="43"/>
    </location>
    <ligand>
        <name>Zn(2+)</name>
        <dbReference type="ChEBI" id="CHEBI:29105"/>
    </ligand>
</feature>
<evidence type="ECO:0000255" key="1">
    <source>
        <dbReference type="HAMAP-Rule" id="MF_01364"/>
    </source>
</evidence>
<evidence type="ECO:0000305" key="2"/>
<sequence>MAKKSMIVRNARQPKYAVRHHNRCKLCGRPHAYIRKFGICRICFRELAYKGELPGVKKASW</sequence>
<protein>
    <recommendedName>
        <fullName evidence="1">Small ribosomal subunit protein uS14</fullName>
    </recommendedName>
    <alternativeName>
        <fullName evidence="2">30S ribosomal protein S14 type Z</fullName>
    </alternativeName>
</protein>
<keyword id="KW-0479">Metal-binding</keyword>
<keyword id="KW-0687">Ribonucleoprotein</keyword>
<keyword id="KW-0689">Ribosomal protein</keyword>
<keyword id="KW-0694">RNA-binding</keyword>
<keyword id="KW-0699">rRNA-binding</keyword>
<keyword id="KW-0862">Zinc</keyword>
<reference key="1">
    <citation type="journal article" date="2012" name="BMC Microbiol.">
        <title>Genome sequence of Desulfitobacterium hafniense DCB-2, a Gram-positive anaerobe capable of dehalogenation and metal reduction.</title>
        <authorList>
            <person name="Kim S.H."/>
            <person name="Harzman C."/>
            <person name="Davis J.K."/>
            <person name="Hutcheson R."/>
            <person name="Broderick J.B."/>
            <person name="Marsh T.L."/>
            <person name="Tiedje J.M."/>
        </authorList>
    </citation>
    <scope>NUCLEOTIDE SEQUENCE [LARGE SCALE GENOMIC DNA]</scope>
    <source>
        <strain>DSM 10664 / DCB-2</strain>
    </source>
</reference>